<evidence type="ECO:0000269" key="1">
    <source>
    </source>
</evidence>
<evidence type="ECO:0000305" key="2"/>
<dbReference type="EMBL" id="AC135920">
    <property type="protein sequence ID" value="AAT85108.1"/>
    <property type="molecule type" value="Genomic_DNA"/>
</dbReference>
<dbReference type="EMBL" id="AP008211">
    <property type="protein sequence ID" value="BAF16799.1"/>
    <property type="molecule type" value="Genomic_DNA"/>
</dbReference>
<dbReference type="EMBL" id="AP014961">
    <property type="status" value="NOT_ANNOTATED_CDS"/>
    <property type="molecule type" value="Genomic_DNA"/>
</dbReference>
<dbReference type="EMBL" id="CM000142">
    <property type="protein sequence ID" value="EAZ33220.1"/>
    <property type="molecule type" value="Genomic_DNA"/>
</dbReference>
<dbReference type="FunCoup" id="A3B0Y1">
    <property type="interactions" value="302"/>
</dbReference>
<dbReference type="STRING" id="39947.A3B0Y1"/>
<dbReference type="PaxDb" id="39947-A3B0Y1"/>
<dbReference type="HOGENOM" id="CLU_204176_0_0_1"/>
<dbReference type="InParanoid" id="A3B0Y1"/>
<dbReference type="Proteomes" id="UP000000763">
    <property type="component" value="Chromosome 5"/>
</dbReference>
<dbReference type="Proteomes" id="UP000007752">
    <property type="component" value="Chromosome 5"/>
</dbReference>
<dbReference type="Proteomes" id="UP000059680">
    <property type="component" value="Chromosome 5"/>
</dbReference>
<dbReference type="GO" id="GO:0005507">
    <property type="term" value="F:copper ion binding"/>
    <property type="evidence" value="ECO:0000318"/>
    <property type="project" value="GO_Central"/>
</dbReference>
<dbReference type="GO" id="GO:0008270">
    <property type="term" value="F:zinc ion binding"/>
    <property type="evidence" value="ECO:0000318"/>
    <property type="project" value="GO_Central"/>
</dbReference>
<dbReference type="GO" id="GO:0006878">
    <property type="term" value="P:intracellular copper ion homeostasis"/>
    <property type="evidence" value="ECO:0007669"/>
    <property type="project" value="InterPro"/>
</dbReference>
<dbReference type="InterPro" id="IPR044671">
    <property type="entry name" value="MT3"/>
</dbReference>
<dbReference type="PANTHER" id="PTHR33357">
    <property type="entry name" value="METALLOTHIONEIN-LIKE PROTEIN 3"/>
    <property type="match status" value="1"/>
</dbReference>
<dbReference type="PANTHER" id="PTHR33357:SF3">
    <property type="entry name" value="METALLOTHIONEIN-LIKE PROTEIN 3"/>
    <property type="match status" value="1"/>
</dbReference>
<feature type="chain" id="PRO_0000263058" description="Metallothionein-like protein 3B">
    <location>
        <begin position="1"/>
        <end position="65"/>
    </location>
</feature>
<name>MT3B_ORYSJ</name>
<accession>A3B0Y1</accession>
<accession>O22376</accession>
<accession>Q6ATL2</accession>
<comment type="function">
    <text evidence="2">Metallothioneins have a high content of cysteine residues that bind various heavy metals.</text>
</comment>
<comment type="tissue specificity">
    <text evidence="1">Expressed in leaves and rachis.</text>
</comment>
<comment type="similarity">
    <text evidence="2">Belongs to the metallothionein superfamily. Type 15 family.</text>
</comment>
<keyword id="KW-0479">Metal-binding</keyword>
<keyword id="KW-0480">Metal-thiolate cluster</keyword>
<keyword id="KW-1185">Reference proteome</keyword>
<gene>
    <name type="primary">MT3B</name>
    <name type="ordered locus">Os05g0202800</name>
    <name type="ordered locus">LOC_Os05g11320</name>
    <name type="ORF">OsJ_016703</name>
    <name type="ORF">OSJNBa0015G13.2</name>
</gene>
<organism>
    <name type="scientific">Oryza sativa subsp. japonica</name>
    <name type="common">Rice</name>
    <dbReference type="NCBI Taxonomy" id="39947"/>
    <lineage>
        <taxon>Eukaryota</taxon>
        <taxon>Viridiplantae</taxon>
        <taxon>Streptophyta</taxon>
        <taxon>Embryophyta</taxon>
        <taxon>Tracheophyta</taxon>
        <taxon>Spermatophyta</taxon>
        <taxon>Magnoliopsida</taxon>
        <taxon>Liliopsida</taxon>
        <taxon>Poales</taxon>
        <taxon>Poaceae</taxon>
        <taxon>BOP clade</taxon>
        <taxon>Oryzoideae</taxon>
        <taxon>Oryzeae</taxon>
        <taxon>Oryzinae</taxon>
        <taxon>Oryza</taxon>
        <taxon>Oryza sativa</taxon>
    </lineage>
</organism>
<sequence length="65" mass="6857">MSDKCGNCDCADKSQCVKKGTSYGVVIVDAEKSHFEMAEEVGYEENDGKCKCTTGCSCAGCNCGK</sequence>
<proteinExistence type="evidence at transcript level"/>
<protein>
    <recommendedName>
        <fullName>Metallothionein-like protein 3B</fullName>
    </recommendedName>
    <alternativeName>
        <fullName>Class I metallothionein-like protein 3B</fullName>
    </alternativeName>
    <alternativeName>
        <fullName>OsMT-I-3b</fullName>
    </alternativeName>
</protein>
<reference key="1">
    <citation type="journal article" date="2005" name="Mol. Genet. Genomics">
        <title>A fine physical map of the rice chromosome 5.</title>
        <authorList>
            <person name="Cheng C.-H."/>
            <person name="Chung M.C."/>
            <person name="Liu S.-M."/>
            <person name="Chen S.-K."/>
            <person name="Kao F.Y."/>
            <person name="Lin S.-J."/>
            <person name="Hsiao S.-H."/>
            <person name="Tseng I.C."/>
            <person name="Hsing Y.-I.C."/>
            <person name="Wu H.-P."/>
            <person name="Chen C.-S."/>
            <person name="Shaw J.-F."/>
            <person name="Wu J."/>
            <person name="Matsumoto T."/>
            <person name="Sasaki T."/>
            <person name="Chen H.-C."/>
            <person name="Chow T.-Y."/>
        </authorList>
    </citation>
    <scope>NUCLEOTIDE SEQUENCE [LARGE SCALE GENOMIC DNA]</scope>
    <source>
        <strain>cv. Nipponbare</strain>
    </source>
</reference>
<reference key="2">
    <citation type="journal article" date="2005" name="Nature">
        <title>The map-based sequence of the rice genome.</title>
        <authorList>
            <consortium name="International rice genome sequencing project (IRGSP)"/>
        </authorList>
    </citation>
    <scope>NUCLEOTIDE SEQUENCE [LARGE SCALE GENOMIC DNA]</scope>
    <source>
        <strain>cv. Nipponbare</strain>
    </source>
</reference>
<reference key="3">
    <citation type="journal article" date="2008" name="Nucleic Acids Res.">
        <title>The rice annotation project database (RAP-DB): 2008 update.</title>
        <authorList>
            <consortium name="The rice annotation project (RAP)"/>
        </authorList>
    </citation>
    <scope>GENOME REANNOTATION</scope>
    <source>
        <strain>cv. Nipponbare</strain>
    </source>
</reference>
<reference key="4">
    <citation type="journal article" date="2013" name="Rice">
        <title>Improvement of the Oryza sativa Nipponbare reference genome using next generation sequence and optical map data.</title>
        <authorList>
            <person name="Kawahara Y."/>
            <person name="de la Bastide M."/>
            <person name="Hamilton J.P."/>
            <person name="Kanamori H."/>
            <person name="McCombie W.R."/>
            <person name="Ouyang S."/>
            <person name="Schwartz D.C."/>
            <person name="Tanaka T."/>
            <person name="Wu J."/>
            <person name="Zhou S."/>
            <person name="Childs K.L."/>
            <person name="Davidson R.M."/>
            <person name="Lin H."/>
            <person name="Quesada-Ocampo L."/>
            <person name="Vaillancourt B."/>
            <person name="Sakai H."/>
            <person name="Lee S.S."/>
            <person name="Kim J."/>
            <person name="Numa H."/>
            <person name="Itoh T."/>
            <person name="Buell C.R."/>
            <person name="Matsumoto T."/>
        </authorList>
    </citation>
    <scope>GENOME REANNOTATION</scope>
    <source>
        <strain>cv. Nipponbare</strain>
    </source>
</reference>
<reference key="5">
    <citation type="journal article" date="2005" name="PLoS Biol.">
        <title>The genomes of Oryza sativa: a history of duplications.</title>
        <authorList>
            <person name="Yu J."/>
            <person name="Wang J."/>
            <person name="Lin W."/>
            <person name="Li S."/>
            <person name="Li H."/>
            <person name="Zhou J."/>
            <person name="Ni P."/>
            <person name="Dong W."/>
            <person name="Hu S."/>
            <person name="Zeng C."/>
            <person name="Zhang J."/>
            <person name="Zhang Y."/>
            <person name="Li R."/>
            <person name="Xu Z."/>
            <person name="Li S."/>
            <person name="Li X."/>
            <person name="Zheng H."/>
            <person name="Cong L."/>
            <person name="Lin L."/>
            <person name="Yin J."/>
            <person name="Geng J."/>
            <person name="Li G."/>
            <person name="Shi J."/>
            <person name="Liu J."/>
            <person name="Lv H."/>
            <person name="Li J."/>
            <person name="Wang J."/>
            <person name="Deng Y."/>
            <person name="Ran L."/>
            <person name="Shi X."/>
            <person name="Wang X."/>
            <person name="Wu Q."/>
            <person name="Li C."/>
            <person name="Ren X."/>
            <person name="Wang J."/>
            <person name="Wang X."/>
            <person name="Li D."/>
            <person name="Liu D."/>
            <person name="Zhang X."/>
            <person name="Ji Z."/>
            <person name="Zhao W."/>
            <person name="Sun Y."/>
            <person name="Zhang Z."/>
            <person name="Bao J."/>
            <person name="Han Y."/>
            <person name="Dong L."/>
            <person name="Ji J."/>
            <person name="Chen P."/>
            <person name="Wu S."/>
            <person name="Liu J."/>
            <person name="Xiao Y."/>
            <person name="Bu D."/>
            <person name="Tan J."/>
            <person name="Yang L."/>
            <person name="Ye C."/>
            <person name="Zhang J."/>
            <person name="Xu J."/>
            <person name="Zhou Y."/>
            <person name="Yu Y."/>
            <person name="Zhang B."/>
            <person name="Zhuang S."/>
            <person name="Wei H."/>
            <person name="Liu B."/>
            <person name="Lei M."/>
            <person name="Yu H."/>
            <person name="Li Y."/>
            <person name="Xu H."/>
            <person name="Wei S."/>
            <person name="He X."/>
            <person name="Fang L."/>
            <person name="Zhang Z."/>
            <person name="Zhang Y."/>
            <person name="Huang X."/>
            <person name="Su Z."/>
            <person name="Tong W."/>
            <person name="Li J."/>
            <person name="Tong Z."/>
            <person name="Li S."/>
            <person name="Ye J."/>
            <person name="Wang L."/>
            <person name="Fang L."/>
            <person name="Lei T."/>
            <person name="Chen C.-S."/>
            <person name="Chen H.-C."/>
            <person name="Xu Z."/>
            <person name="Li H."/>
            <person name="Huang H."/>
            <person name="Zhang F."/>
            <person name="Xu H."/>
            <person name="Li N."/>
            <person name="Zhao C."/>
            <person name="Li S."/>
            <person name="Dong L."/>
            <person name="Huang Y."/>
            <person name="Li L."/>
            <person name="Xi Y."/>
            <person name="Qi Q."/>
            <person name="Li W."/>
            <person name="Zhang B."/>
            <person name="Hu W."/>
            <person name="Zhang Y."/>
            <person name="Tian X."/>
            <person name="Jiao Y."/>
            <person name="Liang X."/>
            <person name="Jin J."/>
            <person name="Gao L."/>
            <person name="Zheng W."/>
            <person name="Hao B."/>
            <person name="Liu S.-M."/>
            <person name="Wang W."/>
            <person name="Yuan L."/>
            <person name="Cao M."/>
            <person name="McDermott J."/>
            <person name="Samudrala R."/>
            <person name="Wang J."/>
            <person name="Wong G.K.-S."/>
            <person name="Yang H."/>
        </authorList>
    </citation>
    <scope>NUCLEOTIDE SEQUENCE [LARGE SCALE GENOMIC DNA]</scope>
    <source>
        <strain>cv. Nipponbare</strain>
    </source>
</reference>
<reference key="6">
    <citation type="journal article" date="2006" name="J. Biochem. Mol. Biol.">
        <title>Molecular analyses of the metallothionein gene family in rice (Oryza sativa L.).</title>
        <authorList>
            <person name="Zhou G."/>
            <person name="Xu Y."/>
            <person name="Li J."/>
            <person name="Yang L."/>
            <person name="Liu J.-Y."/>
        </authorList>
    </citation>
    <scope>GENE FAMILY</scope>
    <scope>TISSUE SPECIFICITY</scope>
</reference>